<accession>Q1RGF9</accession>
<keyword id="KW-0963">Cytoplasm</keyword>
<keyword id="KW-0274">FAD</keyword>
<keyword id="KW-0285">Flavoprotein</keyword>
<keyword id="KW-0560">Oxidoreductase</keyword>
<feature type="chain" id="PRO_1000064349" description="Crotonobetainyl-CoA reductase">
    <location>
        <begin position="1"/>
        <end position="380"/>
    </location>
</feature>
<comment type="function">
    <text evidence="1">Catalyzes the reduction of crotonobetainyl-CoA to gamma-butyrobetainyl-CoA.</text>
</comment>
<comment type="catalytic activity">
    <reaction evidence="1">
        <text>4-(trimethylamino)butanoyl-CoA + oxidized [electron-transfer flavoprotein] + H(+) = crotonobetainyl-CoA + reduced [electron-transfer flavoprotein]</text>
        <dbReference type="Rhea" id="RHEA:51584"/>
        <dbReference type="Rhea" id="RHEA-COMP:10685"/>
        <dbReference type="Rhea" id="RHEA-COMP:10686"/>
        <dbReference type="ChEBI" id="CHEBI:15378"/>
        <dbReference type="ChEBI" id="CHEBI:57692"/>
        <dbReference type="ChEBI" id="CHEBI:58307"/>
        <dbReference type="ChEBI" id="CHEBI:60933"/>
        <dbReference type="ChEBI" id="CHEBI:61513"/>
        <dbReference type="EC" id="1.3.8.13"/>
    </reaction>
</comment>
<comment type="cofactor">
    <cofactor evidence="1">
        <name>FAD</name>
        <dbReference type="ChEBI" id="CHEBI:57692"/>
    </cofactor>
</comment>
<comment type="pathway">
    <text evidence="1">Amine and polyamine metabolism; carnitine metabolism.</text>
</comment>
<comment type="subunit">
    <text evidence="1">Homotetramer.</text>
</comment>
<comment type="subcellular location">
    <subcellularLocation>
        <location evidence="1">Cytoplasm</location>
    </subcellularLocation>
</comment>
<comment type="similarity">
    <text evidence="1">Belongs to the acyl-CoA dehydrogenase family.</text>
</comment>
<organism>
    <name type="scientific">Escherichia coli (strain UTI89 / UPEC)</name>
    <dbReference type="NCBI Taxonomy" id="364106"/>
    <lineage>
        <taxon>Bacteria</taxon>
        <taxon>Pseudomonadati</taxon>
        <taxon>Pseudomonadota</taxon>
        <taxon>Gammaproteobacteria</taxon>
        <taxon>Enterobacterales</taxon>
        <taxon>Enterobacteriaceae</taxon>
        <taxon>Escherichia</taxon>
    </lineage>
</organism>
<dbReference type="EC" id="1.3.8.13" evidence="1"/>
<dbReference type="EMBL" id="CP000243">
    <property type="protein sequence ID" value="ABE05555.1"/>
    <property type="molecule type" value="Genomic_DNA"/>
</dbReference>
<dbReference type="RefSeq" id="WP_000347117.1">
    <property type="nucleotide sequence ID" value="NZ_CP064825.1"/>
</dbReference>
<dbReference type="SMR" id="Q1RGF9"/>
<dbReference type="GeneID" id="93777396"/>
<dbReference type="KEGG" id="eci:UTI89_C0045"/>
<dbReference type="HOGENOM" id="CLU_018204_0_2_6"/>
<dbReference type="UniPathway" id="UPA00117"/>
<dbReference type="Proteomes" id="UP000001952">
    <property type="component" value="Chromosome"/>
</dbReference>
<dbReference type="GO" id="GO:0005737">
    <property type="term" value="C:cytoplasm"/>
    <property type="evidence" value="ECO:0007669"/>
    <property type="project" value="UniProtKB-SubCell"/>
</dbReference>
<dbReference type="GO" id="GO:0003995">
    <property type="term" value="F:acyl-CoA dehydrogenase activity"/>
    <property type="evidence" value="ECO:0007669"/>
    <property type="project" value="InterPro"/>
</dbReference>
<dbReference type="GO" id="GO:0050660">
    <property type="term" value="F:flavin adenine dinucleotide binding"/>
    <property type="evidence" value="ECO:0007669"/>
    <property type="project" value="InterPro"/>
</dbReference>
<dbReference type="GO" id="GO:0009437">
    <property type="term" value="P:carnitine metabolic process"/>
    <property type="evidence" value="ECO:0007669"/>
    <property type="project" value="UniProtKB-UniRule"/>
</dbReference>
<dbReference type="CDD" id="cd00567">
    <property type="entry name" value="ACAD"/>
    <property type="match status" value="1"/>
</dbReference>
<dbReference type="FunFam" id="1.20.140.10:FF:000001">
    <property type="entry name" value="Acyl-CoA dehydrogenase"/>
    <property type="match status" value="1"/>
</dbReference>
<dbReference type="FunFam" id="2.40.110.10:FF:000002">
    <property type="entry name" value="Acyl-CoA dehydrogenase fadE12"/>
    <property type="match status" value="1"/>
</dbReference>
<dbReference type="FunFam" id="1.10.540.10:FF:000005">
    <property type="entry name" value="Crotonobetainyl-CoA reductase"/>
    <property type="match status" value="1"/>
</dbReference>
<dbReference type="Gene3D" id="1.10.540.10">
    <property type="entry name" value="Acyl-CoA dehydrogenase/oxidase, N-terminal domain"/>
    <property type="match status" value="1"/>
</dbReference>
<dbReference type="Gene3D" id="2.40.110.10">
    <property type="entry name" value="Butyryl-CoA Dehydrogenase, subunit A, domain 2"/>
    <property type="match status" value="1"/>
</dbReference>
<dbReference type="Gene3D" id="1.20.140.10">
    <property type="entry name" value="Butyryl-CoA Dehydrogenase, subunit A, domain 3"/>
    <property type="match status" value="1"/>
</dbReference>
<dbReference type="HAMAP" id="MF_01052">
    <property type="entry name" value="CaiA"/>
    <property type="match status" value="1"/>
</dbReference>
<dbReference type="InterPro" id="IPR006089">
    <property type="entry name" value="Acyl-CoA_DH_CS"/>
</dbReference>
<dbReference type="InterPro" id="IPR006091">
    <property type="entry name" value="Acyl-CoA_Oxase/DH_mid-dom"/>
</dbReference>
<dbReference type="InterPro" id="IPR046373">
    <property type="entry name" value="Acyl-CoA_Oxase/DH_mid-dom_sf"/>
</dbReference>
<dbReference type="InterPro" id="IPR036250">
    <property type="entry name" value="AcylCo_DH-like_C"/>
</dbReference>
<dbReference type="InterPro" id="IPR009075">
    <property type="entry name" value="AcylCo_DH/oxidase_C"/>
</dbReference>
<dbReference type="InterPro" id="IPR013786">
    <property type="entry name" value="AcylCoA_DH/ox_N"/>
</dbReference>
<dbReference type="InterPro" id="IPR037069">
    <property type="entry name" value="AcylCoA_DH/ox_N_sf"/>
</dbReference>
<dbReference type="InterPro" id="IPR009100">
    <property type="entry name" value="AcylCoA_DH/oxidase_NM_dom_sf"/>
</dbReference>
<dbReference type="InterPro" id="IPR023450">
    <property type="entry name" value="CaiA"/>
</dbReference>
<dbReference type="NCBIfam" id="NF002885">
    <property type="entry name" value="PRK03354.1"/>
    <property type="match status" value="1"/>
</dbReference>
<dbReference type="PANTHER" id="PTHR43884">
    <property type="entry name" value="ACYL-COA DEHYDROGENASE"/>
    <property type="match status" value="1"/>
</dbReference>
<dbReference type="PANTHER" id="PTHR43884:SF12">
    <property type="entry name" value="ISOVALERYL-COA DEHYDROGENASE, MITOCHONDRIAL-RELATED"/>
    <property type="match status" value="1"/>
</dbReference>
<dbReference type="Pfam" id="PF00441">
    <property type="entry name" value="Acyl-CoA_dh_1"/>
    <property type="match status" value="1"/>
</dbReference>
<dbReference type="Pfam" id="PF02770">
    <property type="entry name" value="Acyl-CoA_dh_M"/>
    <property type="match status" value="1"/>
</dbReference>
<dbReference type="Pfam" id="PF02771">
    <property type="entry name" value="Acyl-CoA_dh_N"/>
    <property type="match status" value="1"/>
</dbReference>
<dbReference type="PIRSF" id="PIRSF016578">
    <property type="entry name" value="HsaA"/>
    <property type="match status" value="1"/>
</dbReference>
<dbReference type="SUPFAM" id="SSF47203">
    <property type="entry name" value="Acyl-CoA dehydrogenase C-terminal domain-like"/>
    <property type="match status" value="1"/>
</dbReference>
<dbReference type="SUPFAM" id="SSF56645">
    <property type="entry name" value="Acyl-CoA dehydrogenase NM domain-like"/>
    <property type="match status" value="1"/>
</dbReference>
<dbReference type="PROSITE" id="PS00072">
    <property type="entry name" value="ACYL_COA_DH_1"/>
    <property type="match status" value="1"/>
</dbReference>
<dbReference type="PROSITE" id="PS00073">
    <property type="entry name" value="ACYL_COA_DH_2"/>
    <property type="match status" value="1"/>
</dbReference>
<reference key="1">
    <citation type="journal article" date="2006" name="Proc. Natl. Acad. Sci. U.S.A.">
        <title>Identification of genes subject to positive selection in uropathogenic strains of Escherichia coli: a comparative genomics approach.</title>
        <authorList>
            <person name="Chen S.L."/>
            <person name="Hung C.-S."/>
            <person name="Xu J."/>
            <person name="Reigstad C.S."/>
            <person name="Magrini V."/>
            <person name="Sabo A."/>
            <person name="Blasiar D."/>
            <person name="Bieri T."/>
            <person name="Meyer R.R."/>
            <person name="Ozersky P."/>
            <person name="Armstrong J.R."/>
            <person name="Fulton R.S."/>
            <person name="Latreille J.P."/>
            <person name="Spieth J."/>
            <person name="Hooton T.M."/>
            <person name="Mardis E.R."/>
            <person name="Hultgren S.J."/>
            <person name="Gordon J.I."/>
        </authorList>
    </citation>
    <scope>NUCLEOTIDE SEQUENCE [LARGE SCALE GENOMIC DNA]</scope>
    <source>
        <strain>UTI89 / UPEC</strain>
    </source>
</reference>
<sequence>MDFNLNDEQELFVAGIRELMASENWEAYFAECDRDSVYPERFVKALADMGIDSLLIPEEHGGLDAGFVTLAAVWMELGRLGAPTYVLYQLPGGFNTFLREGTQEQIDKIMAFRGTGKQMWNSAITEPGAGSDVGSLKTTYTRRNGKIYLNGSKCFITSSAYTPYIVVMARDGASPDKPVYTEWFVDMSKPGIKVTKLEKLGLRMDSCCEITFDDVELDEKDMFGREGNGFNRVKEEFDHERFLVALTNYGTAMCAFEDAARYANQRVQFGEAIGRFQLIQEKFAHMAIKLNSMKNMLYEAAWKADNGTITSGDAAMCKYFCANAAFEVVDSAMQVLGGVGIAGNHRISRFWRDLRVDRVSGGSDEMQILTLGRAVLKQYR</sequence>
<proteinExistence type="inferred from homology"/>
<name>CAIA_ECOUT</name>
<protein>
    <recommendedName>
        <fullName evidence="1">Crotonobetainyl-CoA reductase</fullName>
        <ecNumber evidence="1">1.3.8.13</ecNumber>
    </recommendedName>
    <alternativeName>
        <fullName evidence="1">Crotonobetainyl-CoA dehydrogenase</fullName>
    </alternativeName>
</protein>
<gene>
    <name evidence="1" type="primary">caiA</name>
    <name type="ordered locus">UTI89_C0045</name>
</gene>
<evidence type="ECO:0000255" key="1">
    <source>
        <dbReference type="HAMAP-Rule" id="MF_01052"/>
    </source>
</evidence>